<protein>
    <recommendedName>
        <fullName>Putative RNA polymerase II subunit B1 CTD phosphatase RPAP2 homolog</fullName>
        <ecNumber>3.1.3.16</ecNumber>
    </recommendedName>
    <alternativeName>
        <fullName>RNA polymerase II-associated protein 2 homolog</fullName>
    </alternativeName>
</protein>
<organism>
    <name type="scientific">Arabidopsis thaliana</name>
    <name type="common">Mouse-ear cress</name>
    <dbReference type="NCBI Taxonomy" id="3702"/>
    <lineage>
        <taxon>Eukaryota</taxon>
        <taxon>Viridiplantae</taxon>
        <taxon>Streptophyta</taxon>
        <taxon>Embryophyta</taxon>
        <taxon>Tracheophyta</taxon>
        <taxon>Spermatophyta</taxon>
        <taxon>Magnoliopsida</taxon>
        <taxon>eudicotyledons</taxon>
        <taxon>Gunneridae</taxon>
        <taxon>Pentapetalae</taxon>
        <taxon>rosids</taxon>
        <taxon>malvids</taxon>
        <taxon>Brassicales</taxon>
        <taxon>Brassicaceae</taxon>
        <taxon>Camelineae</taxon>
        <taxon>Arabidopsis</taxon>
    </lineage>
</organism>
<proteinExistence type="evidence at transcript level"/>
<evidence type="ECO:0000250" key="1"/>
<evidence type="ECO:0000255" key="2">
    <source>
        <dbReference type="PROSITE-ProRule" id="PRU00812"/>
    </source>
</evidence>
<evidence type="ECO:0000256" key="3">
    <source>
        <dbReference type="SAM" id="MobiDB-lite"/>
    </source>
</evidence>
<evidence type="ECO:0000303" key="4">
    <source ref="3"/>
</evidence>
<evidence type="ECO:0000305" key="5"/>
<comment type="function">
    <text evidence="1">Putative RNA polymerase II subunit B1 C-terminal domain (CTD) phosphatase involved in RNA polymerase II transcription regulation.</text>
</comment>
<comment type="catalytic activity">
    <reaction>
        <text>O-phospho-L-seryl-[protein] + H2O = L-seryl-[protein] + phosphate</text>
        <dbReference type="Rhea" id="RHEA:20629"/>
        <dbReference type="Rhea" id="RHEA-COMP:9863"/>
        <dbReference type="Rhea" id="RHEA-COMP:11604"/>
        <dbReference type="ChEBI" id="CHEBI:15377"/>
        <dbReference type="ChEBI" id="CHEBI:29999"/>
        <dbReference type="ChEBI" id="CHEBI:43474"/>
        <dbReference type="ChEBI" id="CHEBI:83421"/>
        <dbReference type="EC" id="3.1.3.16"/>
    </reaction>
</comment>
<comment type="catalytic activity">
    <reaction>
        <text>O-phospho-L-threonyl-[protein] + H2O = L-threonyl-[protein] + phosphate</text>
        <dbReference type="Rhea" id="RHEA:47004"/>
        <dbReference type="Rhea" id="RHEA-COMP:11060"/>
        <dbReference type="Rhea" id="RHEA-COMP:11605"/>
        <dbReference type="ChEBI" id="CHEBI:15377"/>
        <dbReference type="ChEBI" id="CHEBI:30013"/>
        <dbReference type="ChEBI" id="CHEBI:43474"/>
        <dbReference type="ChEBI" id="CHEBI:61977"/>
        <dbReference type="EC" id="3.1.3.16"/>
    </reaction>
</comment>
<comment type="subcellular location">
    <subcellularLocation>
        <location evidence="1">Nucleus</location>
    </subcellularLocation>
</comment>
<comment type="alternative products">
    <event type="alternative splicing"/>
    <isoform>
        <id>F4K1B1-1</id>
        <name>1</name>
        <sequence type="displayed"/>
    </isoform>
    <isoform>
        <id>F4K1B1-2</id>
        <name>2</name>
        <sequence type="described" ref="VSP_042606"/>
    </isoform>
</comment>
<comment type="similarity">
    <text evidence="2 5">Belongs to the RPAP2 family.</text>
</comment>
<comment type="sequence caution" evidence="5">
    <conflict type="erroneous gene model prediction">
        <sequence resource="EMBL-CDS" id="AAB61054"/>
    </conflict>
</comment>
<accession>F4K1B1</accession>
<accession>O04626</accession>
<accession>Q5XF30</accession>
<feature type="chain" id="PRO_0000416291" description="Putative RNA polymerase II subunit B1 CTD phosphatase RPAP2 homolog">
    <location>
        <begin position="1"/>
        <end position="735"/>
    </location>
</feature>
<feature type="zinc finger region" description="RTR1-type" evidence="2">
    <location>
        <begin position="33"/>
        <end position="118"/>
    </location>
</feature>
<feature type="region of interest" description="Disordered" evidence="3">
    <location>
        <begin position="179"/>
        <end position="201"/>
    </location>
</feature>
<feature type="region of interest" description="Disordered" evidence="3">
    <location>
        <begin position="349"/>
        <end position="374"/>
    </location>
</feature>
<feature type="region of interest" description="Disordered" evidence="3">
    <location>
        <begin position="519"/>
        <end position="538"/>
    </location>
</feature>
<feature type="compositionally biased region" description="Low complexity" evidence="3">
    <location>
        <begin position="349"/>
        <end position="364"/>
    </location>
</feature>
<feature type="compositionally biased region" description="Acidic residues" evidence="3">
    <location>
        <begin position="519"/>
        <end position="530"/>
    </location>
</feature>
<feature type="binding site" evidence="2">
    <location>
        <position position="56"/>
    </location>
    <ligand>
        <name>Zn(2+)</name>
        <dbReference type="ChEBI" id="CHEBI:29105"/>
    </ligand>
</feature>
<feature type="binding site" evidence="2">
    <location>
        <position position="61"/>
    </location>
    <ligand>
        <name>Zn(2+)</name>
        <dbReference type="ChEBI" id="CHEBI:29105"/>
    </ligand>
</feature>
<feature type="binding site" evidence="2">
    <location>
        <position position="94"/>
    </location>
    <ligand>
        <name>Zn(2+)</name>
        <dbReference type="ChEBI" id="CHEBI:29105"/>
    </ligand>
</feature>
<feature type="binding site" evidence="2">
    <location>
        <position position="98"/>
    </location>
    <ligand>
        <name>Zn(2+)</name>
        <dbReference type="ChEBI" id="CHEBI:29105"/>
    </ligand>
</feature>
<feature type="splice variant" id="VSP_042606" description="In isoform 2." evidence="4">
    <location>
        <begin position="1"/>
        <end position="305"/>
    </location>
</feature>
<reference key="1">
    <citation type="journal article" date="2000" name="Nature">
        <title>Sequence and analysis of chromosome 5 of the plant Arabidopsis thaliana.</title>
        <authorList>
            <person name="Tabata S."/>
            <person name="Kaneko T."/>
            <person name="Nakamura Y."/>
            <person name="Kotani H."/>
            <person name="Kato T."/>
            <person name="Asamizu E."/>
            <person name="Miyajima N."/>
            <person name="Sasamoto S."/>
            <person name="Kimura T."/>
            <person name="Hosouchi T."/>
            <person name="Kawashima K."/>
            <person name="Kohara M."/>
            <person name="Matsumoto M."/>
            <person name="Matsuno A."/>
            <person name="Muraki A."/>
            <person name="Nakayama S."/>
            <person name="Nakazaki N."/>
            <person name="Naruo K."/>
            <person name="Okumura S."/>
            <person name="Shinpo S."/>
            <person name="Takeuchi C."/>
            <person name="Wada T."/>
            <person name="Watanabe A."/>
            <person name="Yamada M."/>
            <person name="Yasuda M."/>
            <person name="Sato S."/>
            <person name="de la Bastide M."/>
            <person name="Huang E."/>
            <person name="Spiegel L."/>
            <person name="Gnoj L."/>
            <person name="O'Shaughnessy A."/>
            <person name="Preston R."/>
            <person name="Habermann K."/>
            <person name="Murray J."/>
            <person name="Johnson D."/>
            <person name="Rohlfing T."/>
            <person name="Nelson J."/>
            <person name="Stoneking T."/>
            <person name="Pepin K."/>
            <person name="Spieth J."/>
            <person name="Sekhon M."/>
            <person name="Armstrong J."/>
            <person name="Becker M."/>
            <person name="Belter E."/>
            <person name="Cordum H."/>
            <person name="Cordes M."/>
            <person name="Courtney L."/>
            <person name="Courtney W."/>
            <person name="Dante M."/>
            <person name="Du H."/>
            <person name="Edwards J."/>
            <person name="Fryman J."/>
            <person name="Haakensen B."/>
            <person name="Lamar E."/>
            <person name="Latreille P."/>
            <person name="Leonard S."/>
            <person name="Meyer R."/>
            <person name="Mulvaney E."/>
            <person name="Ozersky P."/>
            <person name="Riley A."/>
            <person name="Strowmatt C."/>
            <person name="Wagner-McPherson C."/>
            <person name="Wollam A."/>
            <person name="Yoakum M."/>
            <person name="Bell M."/>
            <person name="Dedhia N."/>
            <person name="Parnell L."/>
            <person name="Shah R."/>
            <person name="Rodriguez M."/>
            <person name="Hoon See L."/>
            <person name="Vil D."/>
            <person name="Baker J."/>
            <person name="Kirchoff K."/>
            <person name="Toth K."/>
            <person name="King L."/>
            <person name="Bahret A."/>
            <person name="Miller B."/>
            <person name="Marra M.A."/>
            <person name="Martienssen R."/>
            <person name="McCombie W.R."/>
            <person name="Wilson R.K."/>
            <person name="Murphy G."/>
            <person name="Bancroft I."/>
            <person name="Volckaert G."/>
            <person name="Wambutt R."/>
            <person name="Duesterhoeft A."/>
            <person name="Stiekema W."/>
            <person name="Pohl T."/>
            <person name="Entian K.-D."/>
            <person name="Terryn N."/>
            <person name="Hartley N."/>
            <person name="Bent E."/>
            <person name="Johnson S."/>
            <person name="Langham S.-A."/>
            <person name="McCullagh B."/>
            <person name="Robben J."/>
            <person name="Grymonprez B."/>
            <person name="Zimmermann W."/>
            <person name="Ramsperger U."/>
            <person name="Wedler H."/>
            <person name="Balke K."/>
            <person name="Wedler E."/>
            <person name="Peters S."/>
            <person name="van Staveren M."/>
            <person name="Dirkse W."/>
            <person name="Mooijman P."/>
            <person name="Klein Lankhorst R."/>
            <person name="Weitzenegger T."/>
            <person name="Bothe G."/>
            <person name="Rose M."/>
            <person name="Hauf J."/>
            <person name="Berneiser S."/>
            <person name="Hempel S."/>
            <person name="Feldpausch M."/>
            <person name="Lamberth S."/>
            <person name="Villarroel R."/>
            <person name="Gielen J."/>
            <person name="Ardiles W."/>
            <person name="Bents O."/>
            <person name="Lemcke K."/>
            <person name="Kolesov G."/>
            <person name="Mayer K.F.X."/>
            <person name="Rudd S."/>
            <person name="Schoof H."/>
            <person name="Schueller C."/>
            <person name="Zaccaria P."/>
            <person name="Mewes H.-W."/>
            <person name="Bevan M."/>
            <person name="Fransz P.F."/>
        </authorList>
    </citation>
    <scope>NUCLEOTIDE SEQUENCE [LARGE SCALE GENOMIC DNA]</scope>
    <source>
        <strain>cv. Columbia</strain>
    </source>
</reference>
<reference key="2">
    <citation type="journal article" date="2017" name="Plant J.">
        <title>Araport11: a complete reannotation of the Arabidopsis thaliana reference genome.</title>
        <authorList>
            <person name="Cheng C.Y."/>
            <person name="Krishnakumar V."/>
            <person name="Chan A.P."/>
            <person name="Thibaud-Nissen F."/>
            <person name="Schobel S."/>
            <person name="Town C.D."/>
        </authorList>
    </citation>
    <scope>GENOME REANNOTATION</scope>
    <source>
        <strain>cv. Columbia</strain>
    </source>
</reference>
<reference key="3">
    <citation type="submission" date="2004-10" db="EMBL/GenBank/DDBJ databases">
        <title>Arabidopsis ORF clones.</title>
        <authorList>
            <person name="Shinn P."/>
            <person name="Chen H."/>
            <person name="Cheuk R.F."/>
            <person name="Kim C.J."/>
            <person name="Ecker J.R."/>
        </authorList>
    </citation>
    <scope>NUCLEOTIDE SEQUENCE [LARGE SCALE MRNA] (ISOFORM 2)</scope>
    <source>
        <strain>cv. Columbia</strain>
    </source>
</reference>
<keyword id="KW-0025">Alternative splicing</keyword>
<keyword id="KW-0378">Hydrolase</keyword>
<keyword id="KW-0479">Metal-binding</keyword>
<keyword id="KW-0539">Nucleus</keyword>
<keyword id="KW-0904">Protein phosphatase</keyword>
<keyword id="KW-1185">Reference proteome</keyword>
<keyword id="KW-0862">Zinc</keyword>
<keyword id="KW-0863">Zinc-finger</keyword>
<name>RPAP2_ARATH</name>
<sequence>MAKDNEAIAINDAVHKLQLYMLENTTDQNQLFAARKLMSRSDYEDVVTERAIAKLCGYTLCQRFLPSDVSRRGKYRISLKDHKVYDLQETSKFCSAGCLIDSKTFSGSLQEARTLEFDSVKLNEILDLFGDSLEVKGSLDVNKDLDLSKLMIKENFGVRGEELSLEKWMGPSNAVEGYVPFDRSKSSNDSKATTQSNQEKHEMDFTSTVIMPDVNSVSKLPPQTKQASTVVESVDGKGKTVLKEQTVVPPTKKVSRFRREKEKEKKTFGVDGMGCAQEKTTVLPRKILSFCNEIEKDFKNFGFDEMGLASSAMMSDGYGVEYSVSKQPQCSMEDSLSCKLKGDLQTLDGKNTLSGSSSGSNTKGSKTKPEKSRKKIISVEYHANSYEDGEEILAAESYERHKAQDVCSSSEIVTKSCLKISGSKKLSRSVTWADQNDGRGDLCEVRNNDNAAGPSLSSNDIEDVNSLSRLALAEALATALSQAAEAVSSGNSDASDATAKAGIILLPSTHQLDEEVTEEHSEEEMTEEEPTLLKWPNKPGIPDSDLFDRDQSWFDGPPEGFNLTLSNFAVMWDSLFGWVSSSSLAYIYGKEESAHEEFLLVNGKEYPRRIIMVDGLSSEIKQTIAGCLARALPRVVTHLRLPIAISELEKGLGSLLETMSLTGAVPSFRVKEWLVIVLLFLDALSVSRIPRIAPYISNRDKILEGSGIGNEEYETMKDILLPLGRVPQFATRSGA</sequence>
<dbReference type="EC" id="3.1.3.16"/>
<dbReference type="EMBL" id="AF007270">
    <property type="protein sequence ID" value="AAB61054.1"/>
    <property type="status" value="ALT_SEQ"/>
    <property type="molecule type" value="Genomic_DNA"/>
</dbReference>
<dbReference type="EMBL" id="CP002688">
    <property type="protein sequence ID" value="AED93597.1"/>
    <property type="molecule type" value="Genomic_DNA"/>
</dbReference>
<dbReference type="EMBL" id="CP002688">
    <property type="protein sequence ID" value="AED93598.1"/>
    <property type="molecule type" value="Genomic_DNA"/>
</dbReference>
<dbReference type="EMBL" id="BT015786">
    <property type="protein sequence ID" value="AAU90076.1"/>
    <property type="molecule type" value="mRNA"/>
</dbReference>
<dbReference type="PIR" id="T01757">
    <property type="entry name" value="T01757"/>
</dbReference>
<dbReference type="RefSeq" id="NP_198028.2">
    <molecule id="F4K1B1-2"/>
    <property type="nucleotide sequence ID" value="NM_122558.4"/>
</dbReference>
<dbReference type="RefSeq" id="NP_974839.1">
    <molecule id="F4K1B1-1"/>
    <property type="nucleotide sequence ID" value="NM_203110.2"/>
</dbReference>
<dbReference type="SMR" id="F4K1B1"/>
<dbReference type="BioGRID" id="18009">
    <property type="interactions" value="2"/>
</dbReference>
<dbReference type="FunCoup" id="F4K1B1">
    <property type="interactions" value="2577"/>
</dbReference>
<dbReference type="STRING" id="3702.F4K1B1"/>
<dbReference type="iPTMnet" id="F4K1B1"/>
<dbReference type="PaxDb" id="3702-AT5G26760.2"/>
<dbReference type="ProteomicsDB" id="228204">
    <molecule id="F4K1B1-1"/>
</dbReference>
<dbReference type="EnsemblPlants" id="AT5G26760.1">
    <molecule id="F4K1B1-2"/>
    <property type="protein sequence ID" value="AT5G26760.1"/>
    <property type="gene ID" value="AT5G26760"/>
</dbReference>
<dbReference type="EnsemblPlants" id="AT5G26760.2">
    <molecule id="F4K1B1-1"/>
    <property type="protein sequence ID" value="AT5G26760.2"/>
    <property type="gene ID" value="AT5G26760"/>
</dbReference>
<dbReference type="GeneID" id="832734"/>
<dbReference type="Gramene" id="AT5G26760.1">
    <molecule id="F4K1B1-2"/>
    <property type="protein sequence ID" value="AT5G26760.1"/>
    <property type="gene ID" value="AT5G26760"/>
</dbReference>
<dbReference type="Gramene" id="AT5G26760.2">
    <molecule id="F4K1B1-1"/>
    <property type="protein sequence ID" value="AT5G26760.2"/>
    <property type="gene ID" value="AT5G26760"/>
</dbReference>
<dbReference type="KEGG" id="ath:AT5G26760"/>
<dbReference type="Araport" id="AT5G26760"/>
<dbReference type="TAIR" id="AT5G26760">
    <property type="gene designation" value="RIMA"/>
</dbReference>
<dbReference type="eggNOG" id="KOG4780">
    <property type="taxonomic scope" value="Eukaryota"/>
</dbReference>
<dbReference type="HOGENOM" id="CLU_008740_0_0_1"/>
<dbReference type="InParanoid" id="F4K1B1"/>
<dbReference type="OMA" id="WMGPSNA"/>
<dbReference type="PhylomeDB" id="F4K1B1"/>
<dbReference type="PRO" id="PR:F4K1B1"/>
<dbReference type="Proteomes" id="UP000006548">
    <property type="component" value="Chromosome 5"/>
</dbReference>
<dbReference type="ExpressionAtlas" id="F4K1B1">
    <property type="expression patterns" value="baseline and differential"/>
</dbReference>
<dbReference type="GO" id="GO:0005829">
    <property type="term" value="C:cytosol"/>
    <property type="evidence" value="ECO:0000314"/>
    <property type="project" value="TAIR"/>
</dbReference>
<dbReference type="GO" id="GO:0005634">
    <property type="term" value="C:nucleus"/>
    <property type="evidence" value="ECO:0000314"/>
    <property type="project" value="TAIR"/>
</dbReference>
<dbReference type="GO" id="GO:0043175">
    <property type="term" value="F:RNA polymerase core enzyme binding"/>
    <property type="evidence" value="ECO:0007669"/>
    <property type="project" value="InterPro"/>
</dbReference>
<dbReference type="GO" id="GO:0008420">
    <property type="term" value="F:RNA polymerase II CTD heptapeptide repeat phosphatase activity"/>
    <property type="evidence" value="ECO:0007669"/>
    <property type="project" value="InterPro"/>
</dbReference>
<dbReference type="GO" id="GO:0008270">
    <property type="term" value="F:zinc ion binding"/>
    <property type="evidence" value="ECO:0007669"/>
    <property type="project" value="UniProtKB-KW"/>
</dbReference>
<dbReference type="GO" id="GO:0030154">
    <property type="term" value="P:cell differentiation"/>
    <property type="evidence" value="ECO:0000315"/>
    <property type="project" value="TAIR"/>
</dbReference>
<dbReference type="Gene3D" id="1.25.40.820">
    <property type="match status" value="1"/>
</dbReference>
<dbReference type="InterPro" id="IPR039693">
    <property type="entry name" value="Rtr1/RPAP2"/>
</dbReference>
<dbReference type="InterPro" id="IPR007308">
    <property type="entry name" value="Rtr1/RPAP2_dom"/>
</dbReference>
<dbReference type="InterPro" id="IPR038534">
    <property type="entry name" value="Rtr1/RPAP2_sf"/>
</dbReference>
<dbReference type="PANTHER" id="PTHR14732">
    <property type="entry name" value="RNA POLYMERASE II SUBUNIT B1 CTD PHOSPHATASE RPAP2-RELATED"/>
    <property type="match status" value="1"/>
</dbReference>
<dbReference type="PANTHER" id="PTHR14732:SF0">
    <property type="entry name" value="RNA POLYMERASE II SUBUNIT B1 CTD PHOSPHATASE RPAP2-RELATED"/>
    <property type="match status" value="1"/>
</dbReference>
<dbReference type="Pfam" id="PF04181">
    <property type="entry name" value="RPAP2_Rtr1"/>
    <property type="match status" value="1"/>
</dbReference>
<dbReference type="PROSITE" id="PS51479">
    <property type="entry name" value="ZF_RTR1"/>
    <property type="match status" value="1"/>
</dbReference>
<gene>
    <name type="ordered locus">At5g26760</name>
    <name type="ORF">F2P16.20</name>
</gene>